<keyword id="KW-0002">3D-structure</keyword>
<keyword id="KW-0406">Ion transport</keyword>
<keyword id="KW-0460">Magnesium</keyword>
<keyword id="KW-0472">Membrane</keyword>
<keyword id="KW-0496">Mitochondrion</keyword>
<keyword id="KW-0999">Mitochondrion inner membrane</keyword>
<keyword id="KW-1185">Reference proteome</keyword>
<keyword id="KW-0809">Transit peptide</keyword>
<keyword id="KW-0812">Transmembrane</keyword>
<keyword id="KW-1133">Transmembrane helix</keyword>
<keyword id="KW-0813">Transport</keyword>
<protein>
    <recommendedName>
        <fullName>Magnesium transporter MRS2, mitochondrial</fullName>
    </recommendedName>
    <alternativeName>
        <fullName>RNA-splicing protein MRS2</fullName>
    </alternativeName>
</protein>
<organism>
    <name type="scientific">Saccharomyces cerevisiae (strain ATCC 204508 / S288c)</name>
    <name type="common">Baker's yeast</name>
    <dbReference type="NCBI Taxonomy" id="559292"/>
    <lineage>
        <taxon>Eukaryota</taxon>
        <taxon>Fungi</taxon>
        <taxon>Dikarya</taxon>
        <taxon>Ascomycota</taxon>
        <taxon>Saccharomycotina</taxon>
        <taxon>Saccharomycetes</taxon>
        <taxon>Saccharomycetales</taxon>
        <taxon>Saccharomycetaceae</taxon>
        <taxon>Saccharomyces</taxon>
    </lineage>
</organism>
<evidence type="ECO:0000255" key="1"/>
<evidence type="ECO:0000269" key="2">
    <source>
    </source>
</evidence>
<evidence type="ECO:0000269" key="3">
    <source>
    </source>
</evidence>
<evidence type="ECO:0000269" key="4">
    <source>
    </source>
</evidence>
<evidence type="ECO:0000269" key="5">
    <source>
    </source>
</evidence>
<evidence type="ECO:0000269" key="6">
    <source>
    </source>
</evidence>
<evidence type="ECO:0000269" key="7">
    <source>
    </source>
</evidence>
<evidence type="ECO:0000269" key="8">
    <source>
    </source>
</evidence>
<evidence type="ECO:0000305" key="9"/>
<evidence type="ECO:0000305" key="10">
    <source>
    </source>
</evidence>
<evidence type="ECO:0000305" key="11">
    <source>
    </source>
</evidence>
<evidence type="ECO:0007744" key="12">
    <source>
        <dbReference type="PDB" id="3RKG"/>
    </source>
</evidence>
<evidence type="ECO:0007829" key="13">
    <source>
        <dbReference type="PDB" id="3RKG"/>
    </source>
</evidence>
<comment type="function">
    <text evidence="2 3 6 7 8">High-conductance magnesium-selective channel that mediates the influx of magnesium into the mitochondrial matrix (PubMed:12628916, PubMed:17827224, PubMed:20653776, PubMed:23999289). Essential for the splicing of mRNA group II introns in mitochondria by affecting mitochondrial magnesium concentrations, which are critical for group II intron splicing. It also suppresses a variety of mitochondrial intron mutations and its absence may disturb the assembly of mitochondrial membrane complexes (PubMed:11544180).</text>
</comment>
<comment type="subunit">
    <text evidence="7 8">Homopentamer (PubMed:23999289). Forms homooligomers. Interacts with MFM1 (PubMed:20653776).</text>
</comment>
<comment type="interaction">
    <interactant intactId="EBI-11283">
        <id>Q01926</id>
    </interactant>
    <interactant intactId="EBI-33672">
        <id>Q02783</id>
        <label>MFM1</label>
    </interactant>
    <organismsDiffer>false</organismsDiffer>
    <experiments>3</experiments>
</comment>
<comment type="subcellular location">
    <subcellularLocation>
        <location evidence="4 11">Mitochondrion inner membrane</location>
        <topology evidence="4">Multi-pass membrane protein</topology>
    </subcellularLocation>
</comment>
<comment type="miscellaneous">
    <text evidence="5">Present with 768 molecules/cell in log phase SD medium.</text>
</comment>
<comment type="similarity">
    <text evidence="9">Belongs to the CorA metal ion transporter (MIT) (TC 1.A.35) family.</text>
</comment>
<comment type="caution">
    <text evidence="10">Was originally (PubMed:1551905, PubMed:8252639) identified in genetic screens for bona fide RNA splicing factors, but it has later been shown that not the MRS2 protein per se but certain magnesium concentrations are essential for group II intron splicing.</text>
</comment>
<gene>
    <name type="primary">MRS2</name>
    <name type="ordered locus">YOR334W</name>
</gene>
<feature type="transit peptide" description="Mitochondrion" evidence="1">
    <location>
        <begin position="1"/>
        <end position="32"/>
    </location>
</feature>
<feature type="chain" id="PRO_0000021753" description="Magnesium transporter MRS2, mitochondrial">
    <location>
        <begin position="33"/>
        <end position="470"/>
    </location>
</feature>
<feature type="topological domain" description="Mitochondrial matrix" evidence="1">
    <location>
        <begin position="33"/>
        <end position="314"/>
    </location>
</feature>
<feature type="transmembrane region" description="Helical" evidence="1">
    <location>
        <begin position="315"/>
        <end position="333"/>
    </location>
</feature>
<feature type="topological domain" description="Mitochondrial intermembrane" evidence="1">
    <location>
        <begin position="334"/>
        <end position="344"/>
    </location>
</feature>
<feature type="transmembrane region" description="Helical" evidence="1">
    <location>
        <begin position="345"/>
        <end position="361"/>
    </location>
</feature>
<feature type="topological domain" description="Mitochondrial matrix" evidence="1">
    <location>
        <begin position="362"/>
        <end position="470"/>
    </location>
</feature>
<feature type="short sequence motif" description="YGMN" evidence="9">
    <location>
        <begin position="332"/>
        <end position="335"/>
    </location>
</feature>
<feature type="mutagenesis site" description="No effect on Mg(2+) import." evidence="8">
    <original>D</original>
    <variation>A</variation>
    <variation>F</variation>
    <variation>W</variation>
    <location>
        <position position="97"/>
    </location>
</feature>
<feature type="mutagenesis site" description="Increases Mg(2+) import into mitochondria." evidence="8">
    <original>M</original>
    <variation>E</variation>
    <variation>G</variation>
    <location>
        <position position="309"/>
    </location>
</feature>
<feature type="mutagenesis site" description="Decreases Mg(2+) import into mitochondria." evidence="8">
    <original>M</original>
    <variation>F</variation>
    <location>
        <position position="309"/>
    </location>
</feature>
<feature type="mutagenesis site" description="No effect on Mg(2+) import." evidence="8">
    <original>V</original>
    <variation>E</variation>
    <variation>F</variation>
    <variation>G</variation>
    <location>
        <position position="315"/>
    </location>
</feature>
<feature type="sequence conflict" description="In Ref. 1; AAA34795 and 2." evidence="9" ref="1 2">
    <original>S</original>
    <variation>F</variation>
    <location>
        <position position="371"/>
    </location>
</feature>
<feature type="sequence conflict" description="In Ref. 1; AAA34795 and 2." evidence="9" ref="1 2">
    <original>E</original>
    <variation>D</variation>
    <location>
        <position position="448"/>
    </location>
</feature>
<feature type="helix" evidence="13">
    <location>
        <begin position="59"/>
        <end position="62"/>
    </location>
</feature>
<feature type="strand" evidence="13">
    <location>
        <begin position="63"/>
        <end position="69"/>
    </location>
</feature>
<feature type="strand" evidence="13">
    <location>
        <begin position="75"/>
        <end position="83"/>
    </location>
</feature>
<feature type="helix" evidence="13">
    <location>
        <begin position="84"/>
        <end position="90"/>
    </location>
</feature>
<feature type="helix" evidence="13">
    <location>
        <begin position="95"/>
        <end position="100"/>
    </location>
</feature>
<feature type="strand" evidence="13">
    <location>
        <begin position="111"/>
        <end position="114"/>
    </location>
</feature>
<feature type="strand" evidence="13">
    <location>
        <begin position="119"/>
        <end position="123"/>
    </location>
</feature>
<feature type="strand" evidence="13">
    <location>
        <begin position="126"/>
        <end position="130"/>
    </location>
</feature>
<feature type="strand" evidence="13">
    <location>
        <begin position="135"/>
        <end position="138"/>
    </location>
</feature>
<feature type="helix" evidence="13">
    <location>
        <begin position="143"/>
        <end position="161"/>
    </location>
</feature>
<feature type="helix" evidence="13">
    <location>
        <begin position="170"/>
        <end position="206"/>
    </location>
</feature>
<feature type="helix" evidence="13">
    <location>
        <begin position="210"/>
        <end position="241"/>
    </location>
</feature>
<feature type="helix" evidence="13">
    <location>
        <begin position="244"/>
        <end position="249"/>
    </location>
</feature>
<feature type="helix" evidence="13">
    <location>
        <begin position="263"/>
        <end position="303"/>
    </location>
</feature>
<dbReference type="EMBL" id="M82916">
    <property type="protein sequence ID" value="AAA34795.1"/>
    <property type="molecule type" value="Genomic_DNA"/>
</dbReference>
<dbReference type="EMBL" id="Z49821">
    <property type="protein sequence ID" value="CAA89979.1"/>
    <property type="molecule type" value="Genomic_DNA"/>
</dbReference>
<dbReference type="EMBL" id="Z75241">
    <property type="protein sequence ID" value="CAA99656.1"/>
    <property type="molecule type" value="Genomic_DNA"/>
</dbReference>
<dbReference type="EMBL" id="BK006948">
    <property type="protein sequence ID" value="DAA11095.1"/>
    <property type="molecule type" value="Genomic_DNA"/>
</dbReference>
<dbReference type="PIR" id="S62064">
    <property type="entry name" value="S62064"/>
</dbReference>
<dbReference type="RefSeq" id="NP_014979.1">
    <property type="nucleotide sequence ID" value="NM_001183754.1"/>
</dbReference>
<dbReference type="PDB" id="3RKG">
    <property type="method" value="X-ray"/>
    <property type="resolution" value="1.28 A"/>
    <property type="chains" value="A=48-308"/>
</dbReference>
<dbReference type="PDBsum" id="3RKG"/>
<dbReference type="SMR" id="Q01926"/>
<dbReference type="BioGRID" id="34717">
    <property type="interactions" value="178"/>
</dbReference>
<dbReference type="DIP" id="DIP-5325N"/>
<dbReference type="FunCoup" id="Q01926">
    <property type="interactions" value="429"/>
</dbReference>
<dbReference type="IntAct" id="Q01926">
    <property type="interactions" value="1"/>
</dbReference>
<dbReference type="MINT" id="Q01926"/>
<dbReference type="STRING" id="4932.YOR334W"/>
<dbReference type="TCDB" id="1.A.35.5.1">
    <property type="family name" value="the cora metal ion transporter (mit) family"/>
</dbReference>
<dbReference type="PaxDb" id="4932-YOR334W"/>
<dbReference type="PeptideAtlas" id="Q01926"/>
<dbReference type="EnsemblFungi" id="YOR334W_mRNA">
    <property type="protein sequence ID" value="YOR334W"/>
    <property type="gene ID" value="YOR334W"/>
</dbReference>
<dbReference type="GeneID" id="854511"/>
<dbReference type="KEGG" id="sce:YOR334W"/>
<dbReference type="AGR" id="SGD:S000005861"/>
<dbReference type="SGD" id="S000005861">
    <property type="gene designation" value="MRS2"/>
</dbReference>
<dbReference type="VEuPathDB" id="FungiDB:YOR334W"/>
<dbReference type="eggNOG" id="KOG2662">
    <property type="taxonomic scope" value="Eukaryota"/>
</dbReference>
<dbReference type="GeneTree" id="ENSGT00390000009988"/>
<dbReference type="HOGENOM" id="CLU_025144_1_0_1"/>
<dbReference type="InParanoid" id="Q01926"/>
<dbReference type="OMA" id="TLLIHMF"/>
<dbReference type="OrthoDB" id="10251508at2759"/>
<dbReference type="BioCyc" id="YEAST:G3O-33809-MONOMER"/>
<dbReference type="BioGRID-ORCS" id="854511">
    <property type="hits" value="9 hits in 10 CRISPR screens"/>
</dbReference>
<dbReference type="EvolutionaryTrace" id="Q01926"/>
<dbReference type="PRO" id="PR:Q01926"/>
<dbReference type="Proteomes" id="UP000002311">
    <property type="component" value="Chromosome XV"/>
</dbReference>
<dbReference type="RNAct" id="Q01926">
    <property type="molecule type" value="protein"/>
</dbReference>
<dbReference type="GO" id="GO:0005743">
    <property type="term" value="C:mitochondrial inner membrane"/>
    <property type="evidence" value="ECO:0000314"/>
    <property type="project" value="SGD"/>
</dbReference>
<dbReference type="GO" id="GO:0005739">
    <property type="term" value="C:mitochondrion"/>
    <property type="evidence" value="ECO:0007005"/>
    <property type="project" value="SGD"/>
</dbReference>
<dbReference type="GO" id="GO:1901612">
    <property type="term" value="F:cardiolipin binding"/>
    <property type="evidence" value="ECO:0000314"/>
    <property type="project" value="SGD"/>
</dbReference>
<dbReference type="GO" id="GO:0015095">
    <property type="term" value="F:magnesium ion transmembrane transporter activity"/>
    <property type="evidence" value="ECO:0000314"/>
    <property type="project" value="SGD"/>
</dbReference>
<dbReference type="GO" id="GO:0045016">
    <property type="term" value="P:mitochondrial magnesium ion transmembrane transport"/>
    <property type="evidence" value="ECO:0000314"/>
    <property type="project" value="SGD"/>
</dbReference>
<dbReference type="CDD" id="cd12823">
    <property type="entry name" value="Mrs2_Mfm1p-like"/>
    <property type="match status" value="1"/>
</dbReference>
<dbReference type="FunFam" id="1.20.58.340:FF:000005">
    <property type="entry name" value="Inner membrane magnesium transporter MRS2"/>
    <property type="match status" value="1"/>
</dbReference>
<dbReference type="FunFam" id="2.40.128.330:FF:000005">
    <property type="entry name" value="Magnesium transporter MRS2, mitochondrial"/>
    <property type="match status" value="1"/>
</dbReference>
<dbReference type="Gene3D" id="2.40.128.330">
    <property type="match status" value="1"/>
</dbReference>
<dbReference type="Gene3D" id="1.20.58.340">
    <property type="entry name" value="Magnesium transport protein CorA, transmembrane region"/>
    <property type="match status" value="1"/>
</dbReference>
<dbReference type="InterPro" id="IPR039204">
    <property type="entry name" value="MRS2-like"/>
</dbReference>
<dbReference type="PANTHER" id="PTHR13890:SF27">
    <property type="entry name" value="MAGNESIUM TRANSPORTER MRS2, MITOCHONDRIAL"/>
    <property type="match status" value="1"/>
</dbReference>
<dbReference type="PANTHER" id="PTHR13890">
    <property type="entry name" value="RNA SPLICING PROTEIN MRS2, MITOCHONDRIAL"/>
    <property type="match status" value="1"/>
</dbReference>
<dbReference type="Pfam" id="PF22099">
    <property type="entry name" value="MRS2-like"/>
    <property type="match status" value="1"/>
</dbReference>
<sequence length="470" mass="54203">MNRRLLVRSISCFQPLSRITFGRPNTPFLRKYADTSTAANTNSTILRKQLLSLKPISASDSLFISCTVFNSKGNIISMSEKFPKWSFLTEHSLFPRDLRKIDNSSIDIIPTIMCKPNCIVINLLHIKALIERDKVYVFDTTNPSAAAKLSVLMYDLESKLSSTKNNSQFYEHRALESIFINVMSALETDFKLHSQICIQILNDLENEVNRLKLRHLLIKSKDLTLFYQKTLLIRDLLDELLENDDDLANMYLTVKKSPKDNFSDLEMLIETYYTQCDEYVQQSESLIQDIKSTEEIVNIILDANRNSLMLLELKVTIYTLGFTVASVLPAFYGMNLKNFIEESEWGFTSVAVFSIVSALYITKKNFNSLRSVTKMTMYPNSPANSSVYPKTSASIALTNKLKRRRKWWKSTKQRLGVLLYGSSYTNKANLSNNKINKGFSKVKKFNMENDIKNKQNRDMIWKWLIEDKKN</sequence>
<proteinExistence type="evidence at protein level"/>
<accession>Q01926</accession>
<accession>D6W329</accession>
<reference key="1">
    <citation type="journal article" date="1992" name="J. Biol. Chem.">
        <title>The nuclear gene MRS2 is essential for the excision of group II introns from yeast mitochondrial transcripts in vivo.</title>
        <authorList>
            <person name="Wiesenberger G."/>
            <person name="Waldherr M."/>
            <person name="Schweyen R.J."/>
        </authorList>
    </citation>
    <scope>NUCLEOTIDE SEQUENCE [GENOMIC DNA]</scope>
    <source>
        <strain>ATCC 44774 / DBY747</strain>
    </source>
</reference>
<reference key="2">
    <citation type="journal article" date="1993" name="Curr. Genet.">
        <title>A multitude of suppressors of group II intron-splicing defects in yeast.</title>
        <authorList>
            <person name="Waldherr M."/>
            <person name="Ragnini A."/>
            <person name="Jank B."/>
            <person name="Teply R."/>
            <person name="Wiesenberger G."/>
            <person name="Schweyen R.J."/>
        </authorList>
    </citation>
    <scope>NUCLEOTIDE SEQUENCE [GENOMIC DNA]</scope>
</reference>
<reference key="3">
    <citation type="journal article" date="1996" name="Yeast">
        <title>Sequence of 29 kb around the PDR10 locus on the right arm of Saccharomyces cerevisiae chromosome XV: similarity to part of chromosome I.</title>
        <authorList>
            <person name="Parle-McDermott A.G."/>
            <person name="Hand N.J."/>
            <person name="Goulding S.E."/>
            <person name="Wolfe K.H."/>
        </authorList>
    </citation>
    <scope>NUCLEOTIDE SEQUENCE [GENOMIC DNA]</scope>
</reference>
<reference key="4">
    <citation type="journal article" date="1997" name="Nature">
        <title>The nucleotide sequence of Saccharomyces cerevisiae chromosome XV.</title>
        <authorList>
            <person name="Dujon B."/>
            <person name="Albermann K."/>
            <person name="Aldea M."/>
            <person name="Alexandraki D."/>
            <person name="Ansorge W."/>
            <person name="Arino J."/>
            <person name="Benes V."/>
            <person name="Bohn C."/>
            <person name="Bolotin-Fukuhara M."/>
            <person name="Bordonne R."/>
            <person name="Boyer J."/>
            <person name="Camasses A."/>
            <person name="Casamayor A."/>
            <person name="Casas C."/>
            <person name="Cheret G."/>
            <person name="Cziepluch C."/>
            <person name="Daignan-Fornier B."/>
            <person name="Dang V.-D."/>
            <person name="de Haan M."/>
            <person name="Delius H."/>
            <person name="Durand P."/>
            <person name="Fairhead C."/>
            <person name="Feldmann H."/>
            <person name="Gaillon L."/>
            <person name="Galisson F."/>
            <person name="Gamo F.-J."/>
            <person name="Gancedo C."/>
            <person name="Goffeau A."/>
            <person name="Goulding S.E."/>
            <person name="Grivell L.A."/>
            <person name="Habbig B."/>
            <person name="Hand N.J."/>
            <person name="Hani J."/>
            <person name="Hattenhorst U."/>
            <person name="Hebling U."/>
            <person name="Hernando Y."/>
            <person name="Herrero E."/>
            <person name="Heumann K."/>
            <person name="Hiesel R."/>
            <person name="Hilger F."/>
            <person name="Hofmann B."/>
            <person name="Hollenberg C.P."/>
            <person name="Hughes B."/>
            <person name="Jauniaux J.-C."/>
            <person name="Kalogeropoulos A."/>
            <person name="Katsoulou C."/>
            <person name="Kordes E."/>
            <person name="Lafuente M.J."/>
            <person name="Landt O."/>
            <person name="Louis E.J."/>
            <person name="Maarse A.C."/>
            <person name="Madania A."/>
            <person name="Mannhaupt G."/>
            <person name="Marck C."/>
            <person name="Martin R.P."/>
            <person name="Mewes H.-W."/>
            <person name="Michaux G."/>
            <person name="Paces V."/>
            <person name="Parle-McDermott A.G."/>
            <person name="Pearson B.M."/>
            <person name="Perrin A."/>
            <person name="Pettersson B."/>
            <person name="Poch O."/>
            <person name="Pohl T.M."/>
            <person name="Poirey R."/>
            <person name="Portetelle D."/>
            <person name="Pujol A."/>
            <person name="Purnelle B."/>
            <person name="Ramezani Rad M."/>
            <person name="Rechmann S."/>
            <person name="Schwager C."/>
            <person name="Schweizer M."/>
            <person name="Sor F."/>
            <person name="Sterky F."/>
            <person name="Tarassov I.A."/>
            <person name="Teodoru C."/>
            <person name="Tettelin H."/>
            <person name="Thierry A."/>
            <person name="Tobiasch E."/>
            <person name="Tzermia M."/>
            <person name="Uhlen M."/>
            <person name="Unseld M."/>
            <person name="Valens M."/>
            <person name="Vandenbol M."/>
            <person name="Vetter I."/>
            <person name="Vlcek C."/>
            <person name="Voet M."/>
            <person name="Volckaert G."/>
            <person name="Voss H."/>
            <person name="Wambutt R."/>
            <person name="Wedler H."/>
            <person name="Wiemann S."/>
            <person name="Winsor B."/>
            <person name="Wolfe K.H."/>
            <person name="Zollner A."/>
            <person name="Zumstein E."/>
            <person name="Kleine K."/>
        </authorList>
    </citation>
    <scope>NUCLEOTIDE SEQUENCE [LARGE SCALE GENOMIC DNA]</scope>
    <source>
        <strain>ATCC 204508 / S288c</strain>
    </source>
</reference>
<reference key="5">
    <citation type="journal article" date="2014" name="G3 (Bethesda)">
        <title>The reference genome sequence of Saccharomyces cerevisiae: Then and now.</title>
        <authorList>
            <person name="Engel S.R."/>
            <person name="Dietrich F.S."/>
            <person name="Fisk D.G."/>
            <person name="Binkley G."/>
            <person name="Balakrishnan R."/>
            <person name="Costanzo M.C."/>
            <person name="Dwight S.S."/>
            <person name="Hitz B.C."/>
            <person name="Karra K."/>
            <person name="Nash R.S."/>
            <person name="Weng S."/>
            <person name="Wong E.D."/>
            <person name="Lloyd P."/>
            <person name="Skrzypek M.S."/>
            <person name="Miyasato S.R."/>
            <person name="Simison M."/>
            <person name="Cherry J.M."/>
        </authorList>
    </citation>
    <scope>GENOME REANNOTATION</scope>
    <source>
        <strain>ATCC 204508 / S288c</strain>
    </source>
</reference>
<reference key="6">
    <citation type="journal article" date="2001" name="Genes Dev.">
        <title>Mitochondrial Mg(2+) homeostasis is critical for group II intron splicing in vivo.</title>
        <authorList>
            <person name="Gregan J."/>
            <person name="Kolisek M."/>
            <person name="Schweyen R.J."/>
        </authorList>
    </citation>
    <scope>FUNCTION</scope>
</reference>
<reference key="7">
    <citation type="journal article" date="2002" name="J. Biol. Chem.">
        <title>Insertion of bitopic membrane proteins into the inner membrane of mitochondria involves an export step from the matrix.</title>
        <authorList>
            <person name="Baumann F."/>
            <person name="Neupert W."/>
            <person name="Herrmann J.M."/>
        </authorList>
    </citation>
    <scope>TOPOLOGY</scope>
</reference>
<reference key="8">
    <citation type="journal article" date="2003" name="EMBO J.">
        <title>Mrs2p is an essential component of the major electrophoretic Mg2+ influx system in mitochondria.</title>
        <authorList>
            <person name="Kolisek M."/>
            <person name="Zsurka G."/>
            <person name="Samaj J."/>
            <person name="Weghuber J."/>
            <person name="Schweyen R.J."/>
            <person name="Schweigel M."/>
        </authorList>
    </citation>
    <scope>FUNCTION</scope>
</reference>
<reference key="9">
    <citation type="journal article" date="2003" name="Nature">
        <title>Global analysis of protein localization in budding yeast.</title>
        <authorList>
            <person name="Huh W.-K."/>
            <person name="Falvo J.V."/>
            <person name="Gerke L.C."/>
            <person name="Carroll A.S."/>
            <person name="Howson R.W."/>
            <person name="Weissman J.S."/>
            <person name="O'Shea E.K."/>
        </authorList>
    </citation>
    <scope>SUBCELLULAR LOCATION [LARGE SCALE ANALYSIS]</scope>
</reference>
<reference key="10">
    <citation type="journal article" date="2003" name="Nature">
        <title>Global analysis of protein expression in yeast.</title>
        <authorList>
            <person name="Ghaemmaghami S."/>
            <person name="Huh W.-K."/>
            <person name="Bower K."/>
            <person name="Howson R.W."/>
            <person name="Belle A."/>
            <person name="Dephoure N."/>
            <person name="O'Shea E.K."/>
            <person name="Weissman J.S."/>
        </authorList>
    </citation>
    <scope>LEVEL OF PROTEIN EXPRESSION [LARGE SCALE ANALYSIS]</scope>
</reference>
<reference key="11">
    <citation type="journal article" date="2007" name="Biophys. J.">
        <title>Mrs2p forms a high conductance Mg2+ selective channel in mitochondria.</title>
        <authorList>
            <person name="Schindl R."/>
            <person name="Weghuber J."/>
            <person name="Romanin C."/>
            <person name="Schweyen R.J."/>
        </authorList>
    </citation>
    <scope>FUNCTION</scope>
</reference>
<reference key="12">
    <citation type="journal article" date="2010" name="FEBS J.">
        <title>Lpe10p modulates the activity of the Mrs2p-based yeast mitochondrial Mg2+ channel.</title>
        <authorList>
            <person name="Sponder G."/>
            <person name="Svidova S."/>
            <person name="Schindl R."/>
            <person name="Wieser S."/>
            <person name="Schweyen R.J."/>
            <person name="Romanin C."/>
            <person name="Froschauer E.M."/>
            <person name="Weghuber J."/>
        </authorList>
    </citation>
    <scope>FUNCTION</scope>
    <scope>SUBUNIT</scope>
    <scope>INTERACTION WITH MFM1</scope>
</reference>
<reference evidence="12" key="13">
    <citation type="journal article" date="2013" name="Acta Crystallogr. D">
        <title>Structural and functional characterization of the N-terminal domain of the yeast Mg2+ channel Mrs2.</title>
        <authorList>
            <person name="Khan M.B."/>
            <person name="Sponder G."/>
            <person name="Sjoblom B."/>
            <person name="Svidova S."/>
            <person name="Schweyen R.J."/>
            <person name="Carugo O."/>
            <person name="Djinovic-Carugo K."/>
        </authorList>
    </citation>
    <scope>X-RAY CRYSTALLOGRAPHY (1.28 ANGSTROMS) OF 48-308</scope>
    <scope>FUNCTION</scope>
    <scope>SUBUNIT</scope>
    <scope>SUBCELLULAR LOCATION</scope>
    <scope>MUTAGENESIS OF ASP-97; MET-309 AND VAL-315</scope>
</reference>
<name>MRS2_YEAST</name>